<organism>
    <name type="scientific">Pseudomonas fluorescens (strain ATCC BAA-477 / NRRL B-23932 / Pf-5)</name>
    <dbReference type="NCBI Taxonomy" id="220664"/>
    <lineage>
        <taxon>Bacteria</taxon>
        <taxon>Pseudomonadati</taxon>
        <taxon>Pseudomonadota</taxon>
        <taxon>Gammaproteobacteria</taxon>
        <taxon>Pseudomonadales</taxon>
        <taxon>Pseudomonadaceae</taxon>
        <taxon>Pseudomonas</taxon>
    </lineage>
</organism>
<gene>
    <name evidence="1" type="primary">panB2</name>
    <name type="ordered locus">PFL_5277</name>
</gene>
<protein>
    <recommendedName>
        <fullName evidence="1">3-methyl-2-oxobutanoate hydroxymethyltransferase 2</fullName>
        <ecNumber evidence="1">2.1.2.11</ecNumber>
    </recommendedName>
    <alternativeName>
        <fullName evidence="1">Ketopantoate hydroxymethyltransferase 2</fullName>
        <shortName evidence="1">KPHMT 2</shortName>
    </alternativeName>
</protein>
<proteinExistence type="inferred from homology"/>
<evidence type="ECO:0000255" key="1">
    <source>
        <dbReference type="HAMAP-Rule" id="MF_00156"/>
    </source>
</evidence>
<name>PANB2_PSEF5</name>
<keyword id="KW-0963">Cytoplasm</keyword>
<keyword id="KW-0460">Magnesium</keyword>
<keyword id="KW-0479">Metal-binding</keyword>
<keyword id="KW-0566">Pantothenate biosynthesis</keyword>
<keyword id="KW-0808">Transferase</keyword>
<sequence length="266" mass="27966">MPDITLTTLQSLKQKGEKITMLTCYDATFAHTCCEAGVEVLLVGDSLGMVLQGHDSTLPVSTADMAYHVAAVKRGNNGALILADLPFMSYATTEQALSSSAQLMQAGAHMLKIEGAAWLAEPVRLLNERGVPVCVHMGLTPQTVNVLGGYKVQGRNESQARQMRADAIALEQAGAAMLLLECVPSELAAEITQAVKIPVIGIGAGNATDGQVLVLHDMLGLSLSGRSPKFVKNFMAGKDSIQAALSAYVEEVKAVTFPGAEHGFSA</sequence>
<feature type="chain" id="PRO_0000297338" description="3-methyl-2-oxobutanoate hydroxymethyltransferase 2">
    <location>
        <begin position="1"/>
        <end position="266"/>
    </location>
</feature>
<feature type="active site" description="Proton acceptor" evidence="1">
    <location>
        <position position="181"/>
    </location>
</feature>
<feature type="binding site" evidence="1">
    <location>
        <begin position="45"/>
        <end position="46"/>
    </location>
    <ligand>
        <name>3-methyl-2-oxobutanoate</name>
        <dbReference type="ChEBI" id="CHEBI:11851"/>
    </ligand>
</feature>
<feature type="binding site" evidence="1">
    <location>
        <position position="45"/>
    </location>
    <ligand>
        <name>Mg(2+)</name>
        <dbReference type="ChEBI" id="CHEBI:18420"/>
    </ligand>
</feature>
<feature type="binding site" evidence="1">
    <location>
        <position position="84"/>
    </location>
    <ligand>
        <name>3-methyl-2-oxobutanoate</name>
        <dbReference type="ChEBI" id="CHEBI:11851"/>
    </ligand>
</feature>
<feature type="binding site" evidence="1">
    <location>
        <position position="84"/>
    </location>
    <ligand>
        <name>Mg(2+)</name>
        <dbReference type="ChEBI" id="CHEBI:18420"/>
    </ligand>
</feature>
<feature type="binding site" evidence="1">
    <location>
        <position position="112"/>
    </location>
    <ligand>
        <name>3-methyl-2-oxobutanoate</name>
        <dbReference type="ChEBI" id="CHEBI:11851"/>
    </ligand>
</feature>
<feature type="binding site" evidence="1">
    <location>
        <position position="114"/>
    </location>
    <ligand>
        <name>Mg(2+)</name>
        <dbReference type="ChEBI" id="CHEBI:18420"/>
    </ligand>
</feature>
<dbReference type="EC" id="2.1.2.11" evidence="1"/>
<dbReference type="EMBL" id="CP000076">
    <property type="protein sequence ID" value="AAY94491.1"/>
    <property type="molecule type" value="Genomic_DNA"/>
</dbReference>
<dbReference type="SMR" id="Q4K5Y4"/>
<dbReference type="STRING" id="220664.PFL_5277"/>
<dbReference type="KEGG" id="pfl:PFL_5277"/>
<dbReference type="PATRIC" id="fig|220664.5.peg.5389"/>
<dbReference type="eggNOG" id="COG0413">
    <property type="taxonomic scope" value="Bacteria"/>
</dbReference>
<dbReference type="HOGENOM" id="CLU_036645_1_0_6"/>
<dbReference type="UniPathway" id="UPA00028">
    <property type="reaction ID" value="UER00003"/>
</dbReference>
<dbReference type="Proteomes" id="UP000008540">
    <property type="component" value="Chromosome"/>
</dbReference>
<dbReference type="GO" id="GO:0005737">
    <property type="term" value="C:cytoplasm"/>
    <property type="evidence" value="ECO:0007669"/>
    <property type="project" value="UniProtKB-SubCell"/>
</dbReference>
<dbReference type="GO" id="GO:0003864">
    <property type="term" value="F:3-methyl-2-oxobutanoate hydroxymethyltransferase activity"/>
    <property type="evidence" value="ECO:0007669"/>
    <property type="project" value="UniProtKB-UniRule"/>
</dbReference>
<dbReference type="GO" id="GO:0000287">
    <property type="term" value="F:magnesium ion binding"/>
    <property type="evidence" value="ECO:0007669"/>
    <property type="project" value="TreeGrafter"/>
</dbReference>
<dbReference type="GO" id="GO:0015940">
    <property type="term" value="P:pantothenate biosynthetic process"/>
    <property type="evidence" value="ECO:0007669"/>
    <property type="project" value="UniProtKB-UniRule"/>
</dbReference>
<dbReference type="CDD" id="cd06557">
    <property type="entry name" value="KPHMT-like"/>
    <property type="match status" value="1"/>
</dbReference>
<dbReference type="FunFam" id="3.20.20.60:FF:000003">
    <property type="entry name" value="3-methyl-2-oxobutanoate hydroxymethyltransferase"/>
    <property type="match status" value="1"/>
</dbReference>
<dbReference type="Gene3D" id="3.20.20.60">
    <property type="entry name" value="Phosphoenolpyruvate-binding domains"/>
    <property type="match status" value="1"/>
</dbReference>
<dbReference type="HAMAP" id="MF_00156">
    <property type="entry name" value="PanB"/>
    <property type="match status" value="1"/>
</dbReference>
<dbReference type="InterPro" id="IPR003700">
    <property type="entry name" value="Pantoate_hydroxy_MeTrfase"/>
</dbReference>
<dbReference type="InterPro" id="IPR015813">
    <property type="entry name" value="Pyrv/PenolPyrv_kinase-like_dom"/>
</dbReference>
<dbReference type="InterPro" id="IPR040442">
    <property type="entry name" value="Pyrv_kinase-like_dom_sf"/>
</dbReference>
<dbReference type="NCBIfam" id="TIGR00222">
    <property type="entry name" value="panB"/>
    <property type="match status" value="1"/>
</dbReference>
<dbReference type="NCBIfam" id="NF001452">
    <property type="entry name" value="PRK00311.1"/>
    <property type="match status" value="1"/>
</dbReference>
<dbReference type="PANTHER" id="PTHR20881">
    <property type="entry name" value="3-METHYL-2-OXOBUTANOATE HYDROXYMETHYLTRANSFERASE"/>
    <property type="match status" value="1"/>
</dbReference>
<dbReference type="PANTHER" id="PTHR20881:SF0">
    <property type="entry name" value="3-METHYL-2-OXOBUTANOATE HYDROXYMETHYLTRANSFERASE"/>
    <property type="match status" value="1"/>
</dbReference>
<dbReference type="Pfam" id="PF02548">
    <property type="entry name" value="Pantoate_transf"/>
    <property type="match status" value="1"/>
</dbReference>
<dbReference type="PIRSF" id="PIRSF000388">
    <property type="entry name" value="Pantoate_hydroxy_MeTrfase"/>
    <property type="match status" value="1"/>
</dbReference>
<dbReference type="SUPFAM" id="SSF51621">
    <property type="entry name" value="Phosphoenolpyruvate/pyruvate domain"/>
    <property type="match status" value="1"/>
</dbReference>
<reference key="1">
    <citation type="journal article" date="2005" name="Nat. Biotechnol.">
        <title>Complete genome sequence of the plant commensal Pseudomonas fluorescens Pf-5.</title>
        <authorList>
            <person name="Paulsen I.T."/>
            <person name="Press C.M."/>
            <person name="Ravel J."/>
            <person name="Kobayashi D.Y."/>
            <person name="Myers G.S.A."/>
            <person name="Mavrodi D.V."/>
            <person name="DeBoy R.T."/>
            <person name="Seshadri R."/>
            <person name="Ren Q."/>
            <person name="Madupu R."/>
            <person name="Dodson R.J."/>
            <person name="Durkin A.S."/>
            <person name="Brinkac L.M."/>
            <person name="Daugherty S.C."/>
            <person name="Sullivan S.A."/>
            <person name="Rosovitz M.J."/>
            <person name="Gwinn M.L."/>
            <person name="Zhou L."/>
            <person name="Schneider D.J."/>
            <person name="Cartinhour S.W."/>
            <person name="Nelson W.C."/>
            <person name="Weidman J."/>
            <person name="Watkins K."/>
            <person name="Tran K."/>
            <person name="Khouri H."/>
            <person name="Pierson E.A."/>
            <person name="Pierson L.S. III"/>
            <person name="Thomashow L.S."/>
            <person name="Loper J.E."/>
        </authorList>
    </citation>
    <scope>NUCLEOTIDE SEQUENCE [LARGE SCALE GENOMIC DNA]</scope>
    <source>
        <strain>ATCC BAA-477 / NRRL B-23932 / Pf-5</strain>
    </source>
</reference>
<comment type="function">
    <text evidence="1">Catalyzes the reversible reaction in which hydroxymethyl group from 5,10-methylenetetrahydrofolate is transferred onto alpha-ketoisovalerate to form ketopantoate.</text>
</comment>
<comment type="catalytic activity">
    <reaction evidence="1">
        <text>3-methyl-2-oxobutanoate + (6R)-5,10-methylene-5,6,7,8-tetrahydrofolate + H2O = 2-dehydropantoate + (6S)-5,6,7,8-tetrahydrofolate</text>
        <dbReference type="Rhea" id="RHEA:11824"/>
        <dbReference type="ChEBI" id="CHEBI:11561"/>
        <dbReference type="ChEBI" id="CHEBI:11851"/>
        <dbReference type="ChEBI" id="CHEBI:15377"/>
        <dbReference type="ChEBI" id="CHEBI:15636"/>
        <dbReference type="ChEBI" id="CHEBI:57453"/>
        <dbReference type="EC" id="2.1.2.11"/>
    </reaction>
</comment>
<comment type="cofactor">
    <cofactor evidence="1">
        <name>Mg(2+)</name>
        <dbReference type="ChEBI" id="CHEBI:18420"/>
    </cofactor>
    <text evidence="1">Binds 1 Mg(2+) ion per subunit.</text>
</comment>
<comment type="pathway">
    <text evidence="1">Cofactor biosynthesis; (R)-pantothenate biosynthesis; (R)-pantoate from 3-methyl-2-oxobutanoate: step 1/2.</text>
</comment>
<comment type="subunit">
    <text evidence="1">Homodecamer; pentamer of dimers.</text>
</comment>
<comment type="subcellular location">
    <subcellularLocation>
        <location evidence="1">Cytoplasm</location>
    </subcellularLocation>
</comment>
<comment type="similarity">
    <text evidence="1">Belongs to the PanB family.</text>
</comment>
<accession>Q4K5Y4</accession>